<gene>
    <name evidence="1" type="primary">eno</name>
    <name type="ordered locus">BR1132</name>
    <name type="ordered locus">BS1330_I1128</name>
</gene>
<name>ENO_BRUSU</name>
<reference key="1">
    <citation type="journal article" date="2002" name="Proc. Natl. Acad. Sci. U.S.A.">
        <title>The Brucella suis genome reveals fundamental similarities between animal and plant pathogens and symbionts.</title>
        <authorList>
            <person name="Paulsen I.T."/>
            <person name="Seshadri R."/>
            <person name="Nelson K.E."/>
            <person name="Eisen J.A."/>
            <person name="Heidelberg J.F."/>
            <person name="Read T.D."/>
            <person name="Dodson R.J."/>
            <person name="Umayam L.A."/>
            <person name="Brinkac L.M."/>
            <person name="Beanan M.J."/>
            <person name="Daugherty S.C."/>
            <person name="DeBoy R.T."/>
            <person name="Durkin A.S."/>
            <person name="Kolonay J.F."/>
            <person name="Madupu R."/>
            <person name="Nelson W.C."/>
            <person name="Ayodeji B."/>
            <person name="Kraul M."/>
            <person name="Shetty J."/>
            <person name="Malek J.A."/>
            <person name="Van Aken S.E."/>
            <person name="Riedmuller S."/>
            <person name="Tettelin H."/>
            <person name="Gill S.R."/>
            <person name="White O."/>
            <person name="Salzberg S.L."/>
            <person name="Hoover D.L."/>
            <person name="Lindler L.E."/>
            <person name="Halling S.M."/>
            <person name="Boyle S.M."/>
            <person name="Fraser C.M."/>
        </authorList>
    </citation>
    <scope>NUCLEOTIDE SEQUENCE [LARGE SCALE GENOMIC DNA]</scope>
    <source>
        <strain>1330</strain>
    </source>
</reference>
<reference key="2">
    <citation type="journal article" date="2011" name="J. Bacteriol.">
        <title>Revised genome sequence of Brucella suis 1330.</title>
        <authorList>
            <person name="Tae H."/>
            <person name="Shallom S."/>
            <person name="Settlage R."/>
            <person name="Preston D."/>
            <person name="Adams L.G."/>
            <person name="Garner H.R."/>
        </authorList>
    </citation>
    <scope>NUCLEOTIDE SEQUENCE [LARGE SCALE GENOMIC DNA]</scope>
    <source>
        <strain>1330</strain>
    </source>
</reference>
<evidence type="ECO:0000255" key="1">
    <source>
        <dbReference type="HAMAP-Rule" id="MF_00318"/>
    </source>
</evidence>
<sequence>MTAIIDIVGREILDSRGNPTVEVDVVLEDGSFGRAAVPSGASTGAHEAVELRDGGSRYLGKGVEKAVEVVNGKIFDAIAGMDAESQLLIDQTLIDLDGSANKGNLGANAILGVSLAVAKAAAQASGLPLYRYVGGTNAHVLPVPMMNIINGGAHADNPIDFQEFMILPVGATSIREAVRYGSEVFHTLKKRLKDAGHNTNVGDEGGFAPNLKNAQAALDFIMESIEKAGFKPGEDIALGLDCAATEFFKDGNYVYEGERKTRDPKAQAKYLAKLASDYPIVTIEDGMAEDDWEGWKYLTDLIGNKCQLVGDDLFVTNSARLRDGIRLGVANSILVKVNQIGSLSETLDAVETAHKAGYTAVMSHRSGETEDSTIADLAVATNCGQIKTGSLARSDRTAKYNQLIRIEEELGKQARYAGRSALKLL</sequence>
<protein>
    <recommendedName>
        <fullName evidence="1">Enolase</fullName>
        <ecNumber evidence="1">4.2.1.11</ecNumber>
    </recommendedName>
    <alternativeName>
        <fullName evidence="1">2-phospho-D-glycerate hydro-lyase</fullName>
    </alternativeName>
    <alternativeName>
        <fullName evidence="1">2-phosphoglycerate dehydratase</fullName>
    </alternativeName>
</protein>
<organism>
    <name type="scientific">Brucella suis biovar 1 (strain 1330)</name>
    <dbReference type="NCBI Taxonomy" id="204722"/>
    <lineage>
        <taxon>Bacteria</taxon>
        <taxon>Pseudomonadati</taxon>
        <taxon>Pseudomonadota</taxon>
        <taxon>Alphaproteobacteria</taxon>
        <taxon>Hyphomicrobiales</taxon>
        <taxon>Brucellaceae</taxon>
        <taxon>Brucella/Ochrobactrum group</taxon>
        <taxon>Brucella</taxon>
    </lineage>
</organism>
<proteinExistence type="inferred from homology"/>
<dbReference type="EC" id="4.2.1.11" evidence="1"/>
<dbReference type="EMBL" id="AE014291">
    <property type="protein sequence ID" value="AAN30052.1"/>
    <property type="molecule type" value="Genomic_DNA"/>
</dbReference>
<dbReference type="EMBL" id="CP002997">
    <property type="protein sequence ID" value="AEM18470.1"/>
    <property type="molecule type" value="Genomic_DNA"/>
</dbReference>
<dbReference type="RefSeq" id="WP_002964261.1">
    <property type="nucleotide sequence ID" value="NZ_KN046804.1"/>
</dbReference>
<dbReference type="SMR" id="Q8G0G3"/>
<dbReference type="GeneID" id="97533615"/>
<dbReference type="KEGG" id="bms:BR1132"/>
<dbReference type="KEGG" id="bsi:BS1330_I1128"/>
<dbReference type="PATRIC" id="fig|204722.21.peg.1989"/>
<dbReference type="HOGENOM" id="CLU_031223_2_1_5"/>
<dbReference type="PhylomeDB" id="Q8G0G3"/>
<dbReference type="UniPathway" id="UPA00109">
    <property type="reaction ID" value="UER00187"/>
</dbReference>
<dbReference type="Proteomes" id="UP000007104">
    <property type="component" value="Chromosome I"/>
</dbReference>
<dbReference type="GO" id="GO:0009986">
    <property type="term" value="C:cell surface"/>
    <property type="evidence" value="ECO:0007669"/>
    <property type="project" value="UniProtKB-SubCell"/>
</dbReference>
<dbReference type="GO" id="GO:0005576">
    <property type="term" value="C:extracellular region"/>
    <property type="evidence" value="ECO:0007669"/>
    <property type="project" value="UniProtKB-SubCell"/>
</dbReference>
<dbReference type="GO" id="GO:0000015">
    <property type="term" value="C:phosphopyruvate hydratase complex"/>
    <property type="evidence" value="ECO:0007669"/>
    <property type="project" value="InterPro"/>
</dbReference>
<dbReference type="GO" id="GO:0000287">
    <property type="term" value="F:magnesium ion binding"/>
    <property type="evidence" value="ECO:0007669"/>
    <property type="project" value="UniProtKB-UniRule"/>
</dbReference>
<dbReference type="GO" id="GO:0004634">
    <property type="term" value="F:phosphopyruvate hydratase activity"/>
    <property type="evidence" value="ECO:0007669"/>
    <property type="project" value="UniProtKB-UniRule"/>
</dbReference>
<dbReference type="GO" id="GO:0006096">
    <property type="term" value="P:glycolytic process"/>
    <property type="evidence" value="ECO:0007669"/>
    <property type="project" value="UniProtKB-UniRule"/>
</dbReference>
<dbReference type="CDD" id="cd03313">
    <property type="entry name" value="enolase"/>
    <property type="match status" value="1"/>
</dbReference>
<dbReference type="FunFam" id="3.20.20.120:FF:000001">
    <property type="entry name" value="Enolase"/>
    <property type="match status" value="1"/>
</dbReference>
<dbReference type="FunFam" id="3.30.390.10:FF:000001">
    <property type="entry name" value="Enolase"/>
    <property type="match status" value="1"/>
</dbReference>
<dbReference type="Gene3D" id="3.20.20.120">
    <property type="entry name" value="Enolase-like C-terminal domain"/>
    <property type="match status" value="1"/>
</dbReference>
<dbReference type="Gene3D" id="3.30.390.10">
    <property type="entry name" value="Enolase-like, N-terminal domain"/>
    <property type="match status" value="1"/>
</dbReference>
<dbReference type="HAMAP" id="MF_00318">
    <property type="entry name" value="Enolase"/>
    <property type="match status" value="1"/>
</dbReference>
<dbReference type="InterPro" id="IPR000941">
    <property type="entry name" value="Enolase"/>
</dbReference>
<dbReference type="InterPro" id="IPR036849">
    <property type="entry name" value="Enolase-like_C_sf"/>
</dbReference>
<dbReference type="InterPro" id="IPR029017">
    <property type="entry name" value="Enolase-like_N"/>
</dbReference>
<dbReference type="InterPro" id="IPR020810">
    <property type="entry name" value="Enolase_C"/>
</dbReference>
<dbReference type="InterPro" id="IPR020809">
    <property type="entry name" value="Enolase_CS"/>
</dbReference>
<dbReference type="InterPro" id="IPR020811">
    <property type="entry name" value="Enolase_N"/>
</dbReference>
<dbReference type="NCBIfam" id="TIGR01060">
    <property type="entry name" value="eno"/>
    <property type="match status" value="1"/>
</dbReference>
<dbReference type="PANTHER" id="PTHR11902">
    <property type="entry name" value="ENOLASE"/>
    <property type="match status" value="1"/>
</dbReference>
<dbReference type="PANTHER" id="PTHR11902:SF1">
    <property type="entry name" value="ENOLASE"/>
    <property type="match status" value="1"/>
</dbReference>
<dbReference type="Pfam" id="PF00113">
    <property type="entry name" value="Enolase_C"/>
    <property type="match status" value="1"/>
</dbReference>
<dbReference type="Pfam" id="PF03952">
    <property type="entry name" value="Enolase_N"/>
    <property type="match status" value="1"/>
</dbReference>
<dbReference type="PIRSF" id="PIRSF001400">
    <property type="entry name" value="Enolase"/>
    <property type="match status" value="1"/>
</dbReference>
<dbReference type="PRINTS" id="PR00148">
    <property type="entry name" value="ENOLASE"/>
</dbReference>
<dbReference type="SFLD" id="SFLDF00002">
    <property type="entry name" value="enolase"/>
    <property type="match status" value="1"/>
</dbReference>
<dbReference type="SFLD" id="SFLDG00178">
    <property type="entry name" value="enolase"/>
    <property type="match status" value="1"/>
</dbReference>
<dbReference type="SMART" id="SM01192">
    <property type="entry name" value="Enolase_C"/>
    <property type="match status" value="1"/>
</dbReference>
<dbReference type="SMART" id="SM01193">
    <property type="entry name" value="Enolase_N"/>
    <property type="match status" value="1"/>
</dbReference>
<dbReference type="SUPFAM" id="SSF51604">
    <property type="entry name" value="Enolase C-terminal domain-like"/>
    <property type="match status" value="1"/>
</dbReference>
<dbReference type="SUPFAM" id="SSF54826">
    <property type="entry name" value="Enolase N-terminal domain-like"/>
    <property type="match status" value="1"/>
</dbReference>
<dbReference type="PROSITE" id="PS00164">
    <property type="entry name" value="ENOLASE"/>
    <property type="match status" value="1"/>
</dbReference>
<keyword id="KW-0963">Cytoplasm</keyword>
<keyword id="KW-0324">Glycolysis</keyword>
<keyword id="KW-0456">Lyase</keyword>
<keyword id="KW-0460">Magnesium</keyword>
<keyword id="KW-0479">Metal-binding</keyword>
<keyword id="KW-0964">Secreted</keyword>
<feature type="chain" id="PRO_0000133854" description="Enolase">
    <location>
        <begin position="1"/>
        <end position="425"/>
    </location>
</feature>
<feature type="active site" description="Proton donor" evidence="1">
    <location>
        <position position="204"/>
    </location>
</feature>
<feature type="active site" description="Proton acceptor" evidence="1">
    <location>
        <position position="336"/>
    </location>
</feature>
<feature type="binding site" evidence="1">
    <location>
        <position position="162"/>
    </location>
    <ligand>
        <name>(2R)-2-phosphoglycerate</name>
        <dbReference type="ChEBI" id="CHEBI:58289"/>
    </ligand>
</feature>
<feature type="binding site" evidence="1">
    <location>
        <position position="241"/>
    </location>
    <ligand>
        <name>Mg(2+)</name>
        <dbReference type="ChEBI" id="CHEBI:18420"/>
    </ligand>
</feature>
<feature type="binding site" evidence="1">
    <location>
        <position position="284"/>
    </location>
    <ligand>
        <name>Mg(2+)</name>
        <dbReference type="ChEBI" id="CHEBI:18420"/>
    </ligand>
</feature>
<feature type="binding site" evidence="1">
    <location>
        <position position="311"/>
    </location>
    <ligand>
        <name>Mg(2+)</name>
        <dbReference type="ChEBI" id="CHEBI:18420"/>
    </ligand>
</feature>
<feature type="binding site" evidence="1">
    <location>
        <position position="336"/>
    </location>
    <ligand>
        <name>(2R)-2-phosphoglycerate</name>
        <dbReference type="ChEBI" id="CHEBI:58289"/>
    </ligand>
</feature>
<feature type="binding site" evidence="1">
    <location>
        <position position="365"/>
    </location>
    <ligand>
        <name>(2R)-2-phosphoglycerate</name>
        <dbReference type="ChEBI" id="CHEBI:58289"/>
    </ligand>
</feature>
<feature type="binding site" evidence="1">
    <location>
        <position position="366"/>
    </location>
    <ligand>
        <name>(2R)-2-phosphoglycerate</name>
        <dbReference type="ChEBI" id="CHEBI:58289"/>
    </ligand>
</feature>
<feature type="binding site" evidence="1">
    <location>
        <position position="387"/>
    </location>
    <ligand>
        <name>(2R)-2-phosphoglycerate</name>
        <dbReference type="ChEBI" id="CHEBI:58289"/>
    </ligand>
</feature>
<accession>Q8G0G3</accession>
<accession>G0KA54</accession>
<comment type="function">
    <text evidence="1">Catalyzes the reversible conversion of 2-phosphoglycerate (2-PG) into phosphoenolpyruvate (PEP). It is essential for the degradation of carbohydrates via glycolysis.</text>
</comment>
<comment type="catalytic activity">
    <reaction evidence="1">
        <text>(2R)-2-phosphoglycerate = phosphoenolpyruvate + H2O</text>
        <dbReference type="Rhea" id="RHEA:10164"/>
        <dbReference type="ChEBI" id="CHEBI:15377"/>
        <dbReference type="ChEBI" id="CHEBI:58289"/>
        <dbReference type="ChEBI" id="CHEBI:58702"/>
        <dbReference type="EC" id="4.2.1.11"/>
    </reaction>
</comment>
<comment type="cofactor">
    <cofactor evidence="1">
        <name>Mg(2+)</name>
        <dbReference type="ChEBI" id="CHEBI:18420"/>
    </cofactor>
    <text evidence="1">Binds a second Mg(2+) ion via substrate during catalysis.</text>
</comment>
<comment type="pathway">
    <text evidence="1">Carbohydrate degradation; glycolysis; pyruvate from D-glyceraldehyde 3-phosphate: step 4/5.</text>
</comment>
<comment type="subcellular location">
    <subcellularLocation>
        <location evidence="1">Cytoplasm</location>
    </subcellularLocation>
    <subcellularLocation>
        <location evidence="1">Secreted</location>
    </subcellularLocation>
    <subcellularLocation>
        <location evidence="1">Cell surface</location>
    </subcellularLocation>
    <text evidence="1">Fractions of enolase are present in both the cytoplasm and on the cell surface.</text>
</comment>
<comment type="similarity">
    <text evidence="1">Belongs to the enolase family.</text>
</comment>